<sequence>MSKELKLFRNFGIMAHIDAGKTTTSERILYHTGKNHKIGETHDGAATMDWMAQEKERGITITSAATYAKWKGHSLNLIDTPGHVDFTVEVERSLRVLDGAVAVLDGQNGVEPQTETVWRQATKYNVPRIVFVNKMDKTGADFYYSIETMKNRLGVKATAIQIPIGAEADFVGSIDLIEMKAYIYDGKADEEYKIEDIPADYLTKAQVMRSQMIDDVAVFDDEVMEKYLSGEELSHEDIKKCIRKGVISTELYPVLCGTAFKNKGVKKLLDAVVDFLPSPIDVPPIKGVDDHGNPIEYHNDPNEPFAALAFKVATDPFVGRLTYIRVYSGKLDKGTYIYNATKDKKERISRLVKMHSNNRDEIDSISAGDICAVIGLKDTTTGDTICDEKKPVILEQMVFAEPVISLSVEPKTKADQEKMSLALSKLAEEDPTFRTYTNEETGQTIIAGMGELHLDVLVDRMRREFNVQVNVGAPQVSYRETFTEVADAEGKYIKQSGGRGQYGHVWIKFEPNHDKGFEFVDNIVGGKVPKEYIKEVENGLIEALTSGPIAGYQTIDVKATIFDGSYHDVDSSGMAYKIAASLAFKEAAKVCKPVLLEPIMSVDVTTPDDYFGTVMGDISKRRGVIEGQEQRGNAQAIKAKVPLSEMFGYATDLRSNTQGRGQYIMQFSHYAQAPKSVTEEVMVARAKK</sequence>
<accession>B1AJG4</accession>
<dbReference type="EMBL" id="CP000942">
    <property type="protein sequence ID" value="ACA32881.1"/>
    <property type="molecule type" value="Genomic_DNA"/>
</dbReference>
<dbReference type="RefSeq" id="WP_006688607.1">
    <property type="nucleotide sequence ID" value="NC_010503.1"/>
</dbReference>
<dbReference type="SMR" id="B1AJG4"/>
<dbReference type="GeneID" id="29672349"/>
<dbReference type="KEGG" id="upa:UPA3_0560"/>
<dbReference type="HOGENOM" id="CLU_002794_4_1_14"/>
<dbReference type="Proteomes" id="UP000002162">
    <property type="component" value="Chromosome"/>
</dbReference>
<dbReference type="GO" id="GO:0005737">
    <property type="term" value="C:cytoplasm"/>
    <property type="evidence" value="ECO:0007669"/>
    <property type="project" value="UniProtKB-SubCell"/>
</dbReference>
<dbReference type="GO" id="GO:0005525">
    <property type="term" value="F:GTP binding"/>
    <property type="evidence" value="ECO:0007669"/>
    <property type="project" value="UniProtKB-UniRule"/>
</dbReference>
<dbReference type="GO" id="GO:0003924">
    <property type="term" value="F:GTPase activity"/>
    <property type="evidence" value="ECO:0007669"/>
    <property type="project" value="InterPro"/>
</dbReference>
<dbReference type="GO" id="GO:0003746">
    <property type="term" value="F:translation elongation factor activity"/>
    <property type="evidence" value="ECO:0007669"/>
    <property type="project" value="UniProtKB-UniRule"/>
</dbReference>
<dbReference type="GO" id="GO:0032790">
    <property type="term" value="P:ribosome disassembly"/>
    <property type="evidence" value="ECO:0007669"/>
    <property type="project" value="TreeGrafter"/>
</dbReference>
<dbReference type="CDD" id="cd01886">
    <property type="entry name" value="EF-G"/>
    <property type="match status" value="1"/>
</dbReference>
<dbReference type="CDD" id="cd16262">
    <property type="entry name" value="EFG_III"/>
    <property type="match status" value="1"/>
</dbReference>
<dbReference type="CDD" id="cd01434">
    <property type="entry name" value="EFG_mtEFG1_IV"/>
    <property type="match status" value="1"/>
</dbReference>
<dbReference type="CDD" id="cd03713">
    <property type="entry name" value="EFG_mtEFG_C"/>
    <property type="match status" value="1"/>
</dbReference>
<dbReference type="CDD" id="cd04088">
    <property type="entry name" value="EFG_mtEFG_II"/>
    <property type="match status" value="1"/>
</dbReference>
<dbReference type="FunFam" id="2.40.30.10:FF:000006">
    <property type="entry name" value="Elongation factor G"/>
    <property type="match status" value="1"/>
</dbReference>
<dbReference type="FunFam" id="3.30.230.10:FF:000003">
    <property type="entry name" value="Elongation factor G"/>
    <property type="match status" value="1"/>
</dbReference>
<dbReference type="FunFam" id="3.30.70.240:FF:000001">
    <property type="entry name" value="Elongation factor G"/>
    <property type="match status" value="1"/>
</dbReference>
<dbReference type="FunFam" id="3.30.70.870:FF:000001">
    <property type="entry name" value="Elongation factor G"/>
    <property type="match status" value="1"/>
</dbReference>
<dbReference type="FunFam" id="3.40.50.300:FF:000029">
    <property type="entry name" value="Elongation factor G"/>
    <property type="match status" value="1"/>
</dbReference>
<dbReference type="Gene3D" id="3.30.230.10">
    <property type="match status" value="1"/>
</dbReference>
<dbReference type="Gene3D" id="3.30.70.240">
    <property type="match status" value="1"/>
</dbReference>
<dbReference type="Gene3D" id="3.30.70.870">
    <property type="entry name" value="Elongation Factor G (Translational Gtpase), domain 3"/>
    <property type="match status" value="1"/>
</dbReference>
<dbReference type="Gene3D" id="3.40.50.300">
    <property type="entry name" value="P-loop containing nucleotide triphosphate hydrolases"/>
    <property type="match status" value="1"/>
</dbReference>
<dbReference type="Gene3D" id="2.40.30.10">
    <property type="entry name" value="Translation factors"/>
    <property type="match status" value="1"/>
</dbReference>
<dbReference type="HAMAP" id="MF_00054_B">
    <property type="entry name" value="EF_G_EF_2_B"/>
    <property type="match status" value="1"/>
</dbReference>
<dbReference type="InterPro" id="IPR041095">
    <property type="entry name" value="EFG_II"/>
</dbReference>
<dbReference type="InterPro" id="IPR009022">
    <property type="entry name" value="EFG_III"/>
</dbReference>
<dbReference type="InterPro" id="IPR035647">
    <property type="entry name" value="EFG_III/V"/>
</dbReference>
<dbReference type="InterPro" id="IPR047872">
    <property type="entry name" value="EFG_IV"/>
</dbReference>
<dbReference type="InterPro" id="IPR035649">
    <property type="entry name" value="EFG_V"/>
</dbReference>
<dbReference type="InterPro" id="IPR000640">
    <property type="entry name" value="EFG_V-like"/>
</dbReference>
<dbReference type="InterPro" id="IPR004161">
    <property type="entry name" value="EFTu-like_2"/>
</dbReference>
<dbReference type="InterPro" id="IPR031157">
    <property type="entry name" value="G_TR_CS"/>
</dbReference>
<dbReference type="InterPro" id="IPR027417">
    <property type="entry name" value="P-loop_NTPase"/>
</dbReference>
<dbReference type="InterPro" id="IPR020568">
    <property type="entry name" value="Ribosomal_Su5_D2-typ_SF"/>
</dbReference>
<dbReference type="InterPro" id="IPR014721">
    <property type="entry name" value="Ribsml_uS5_D2-typ_fold_subgr"/>
</dbReference>
<dbReference type="InterPro" id="IPR005225">
    <property type="entry name" value="Small_GTP-bd"/>
</dbReference>
<dbReference type="InterPro" id="IPR000795">
    <property type="entry name" value="T_Tr_GTP-bd_dom"/>
</dbReference>
<dbReference type="InterPro" id="IPR009000">
    <property type="entry name" value="Transl_B-barrel_sf"/>
</dbReference>
<dbReference type="InterPro" id="IPR004540">
    <property type="entry name" value="Transl_elong_EFG/EF2"/>
</dbReference>
<dbReference type="InterPro" id="IPR005517">
    <property type="entry name" value="Transl_elong_EFG/EF2_IV"/>
</dbReference>
<dbReference type="NCBIfam" id="TIGR00484">
    <property type="entry name" value="EF-G"/>
    <property type="match status" value="1"/>
</dbReference>
<dbReference type="NCBIfam" id="NF009381">
    <property type="entry name" value="PRK12740.1-5"/>
    <property type="match status" value="1"/>
</dbReference>
<dbReference type="NCBIfam" id="TIGR00231">
    <property type="entry name" value="small_GTP"/>
    <property type="match status" value="1"/>
</dbReference>
<dbReference type="PANTHER" id="PTHR43261:SF1">
    <property type="entry name" value="RIBOSOME-RELEASING FACTOR 2, MITOCHONDRIAL"/>
    <property type="match status" value="1"/>
</dbReference>
<dbReference type="PANTHER" id="PTHR43261">
    <property type="entry name" value="TRANSLATION ELONGATION FACTOR G-RELATED"/>
    <property type="match status" value="1"/>
</dbReference>
<dbReference type="Pfam" id="PF00679">
    <property type="entry name" value="EFG_C"/>
    <property type="match status" value="1"/>
</dbReference>
<dbReference type="Pfam" id="PF14492">
    <property type="entry name" value="EFG_III"/>
    <property type="match status" value="1"/>
</dbReference>
<dbReference type="Pfam" id="PF03764">
    <property type="entry name" value="EFG_IV"/>
    <property type="match status" value="1"/>
</dbReference>
<dbReference type="Pfam" id="PF00009">
    <property type="entry name" value="GTP_EFTU"/>
    <property type="match status" value="1"/>
</dbReference>
<dbReference type="Pfam" id="PF03144">
    <property type="entry name" value="GTP_EFTU_D2"/>
    <property type="match status" value="1"/>
</dbReference>
<dbReference type="PRINTS" id="PR00315">
    <property type="entry name" value="ELONGATNFCT"/>
</dbReference>
<dbReference type="SMART" id="SM00838">
    <property type="entry name" value="EFG_C"/>
    <property type="match status" value="1"/>
</dbReference>
<dbReference type="SMART" id="SM00889">
    <property type="entry name" value="EFG_IV"/>
    <property type="match status" value="1"/>
</dbReference>
<dbReference type="SUPFAM" id="SSF54980">
    <property type="entry name" value="EF-G C-terminal domain-like"/>
    <property type="match status" value="2"/>
</dbReference>
<dbReference type="SUPFAM" id="SSF52540">
    <property type="entry name" value="P-loop containing nucleoside triphosphate hydrolases"/>
    <property type="match status" value="1"/>
</dbReference>
<dbReference type="SUPFAM" id="SSF54211">
    <property type="entry name" value="Ribosomal protein S5 domain 2-like"/>
    <property type="match status" value="1"/>
</dbReference>
<dbReference type="SUPFAM" id="SSF50447">
    <property type="entry name" value="Translation proteins"/>
    <property type="match status" value="1"/>
</dbReference>
<dbReference type="PROSITE" id="PS00301">
    <property type="entry name" value="G_TR_1"/>
    <property type="match status" value="1"/>
</dbReference>
<dbReference type="PROSITE" id="PS51722">
    <property type="entry name" value="G_TR_2"/>
    <property type="match status" value="1"/>
</dbReference>
<name>EFG_UREP2</name>
<keyword id="KW-0963">Cytoplasm</keyword>
<keyword id="KW-0251">Elongation factor</keyword>
<keyword id="KW-0342">GTP-binding</keyword>
<keyword id="KW-0547">Nucleotide-binding</keyword>
<keyword id="KW-0648">Protein biosynthesis</keyword>
<protein>
    <recommendedName>
        <fullName evidence="1">Elongation factor G</fullName>
        <shortName evidence="1">EF-G</shortName>
    </recommendedName>
</protein>
<feature type="chain" id="PRO_1000074976" description="Elongation factor G">
    <location>
        <begin position="1"/>
        <end position="688"/>
    </location>
</feature>
<feature type="domain" description="tr-type G">
    <location>
        <begin position="6"/>
        <end position="280"/>
    </location>
</feature>
<feature type="binding site" evidence="1">
    <location>
        <begin position="15"/>
        <end position="22"/>
    </location>
    <ligand>
        <name>GTP</name>
        <dbReference type="ChEBI" id="CHEBI:37565"/>
    </ligand>
</feature>
<feature type="binding site" evidence="1">
    <location>
        <begin position="79"/>
        <end position="83"/>
    </location>
    <ligand>
        <name>GTP</name>
        <dbReference type="ChEBI" id="CHEBI:37565"/>
    </ligand>
</feature>
<feature type="binding site" evidence="1">
    <location>
        <begin position="133"/>
        <end position="136"/>
    </location>
    <ligand>
        <name>GTP</name>
        <dbReference type="ChEBI" id="CHEBI:37565"/>
    </ligand>
</feature>
<proteinExistence type="inferred from homology"/>
<reference key="1">
    <citation type="submission" date="2008-02" db="EMBL/GenBank/DDBJ databases">
        <title>Genome sequence of Ureaplasma parvum serovar 3.</title>
        <authorList>
            <person name="Methe B.A."/>
            <person name="Glass J."/>
            <person name="Waites K."/>
            <person name="Shrivastava S."/>
        </authorList>
    </citation>
    <scope>NUCLEOTIDE SEQUENCE [LARGE SCALE GENOMIC DNA]</scope>
    <source>
        <strain>ATCC 27815 / 27 / NCTC 11736</strain>
    </source>
</reference>
<gene>
    <name evidence="1" type="primary">fusA</name>
    <name type="ordered locus">UPA3_0560</name>
</gene>
<comment type="function">
    <text evidence="1">Catalyzes the GTP-dependent ribosomal translocation step during translation elongation. During this step, the ribosome changes from the pre-translocational (PRE) to the post-translocational (POST) state as the newly formed A-site-bound peptidyl-tRNA and P-site-bound deacylated tRNA move to the P and E sites, respectively. Catalyzes the coordinated movement of the two tRNA molecules, the mRNA and conformational changes in the ribosome.</text>
</comment>
<comment type="subcellular location">
    <subcellularLocation>
        <location evidence="1">Cytoplasm</location>
    </subcellularLocation>
</comment>
<comment type="similarity">
    <text evidence="1">Belongs to the TRAFAC class translation factor GTPase superfamily. Classic translation factor GTPase family. EF-G/EF-2 subfamily.</text>
</comment>
<evidence type="ECO:0000255" key="1">
    <source>
        <dbReference type="HAMAP-Rule" id="MF_00054"/>
    </source>
</evidence>
<organism>
    <name type="scientific">Ureaplasma parvum serovar 3 (strain ATCC 27815 / 27 / NCTC 11736)</name>
    <dbReference type="NCBI Taxonomy" id="505682"/>
    <lineage>
        <taxon>Bacteria</taxon>
        <taxon>Bacillati</taxon>
        <taxon>Mycoplasmatota</taxon>
        <taxon>Mycoplasmoidales</taxon>
        <taxon>Mycoplasmoidaceae</taxon>
        <taxon>Ureaplasma</taxon>
    </lineage>
</organism>